<feature type="chain" id="PRO_0000358855" description="Transcription factor SCREAM2">
    <location>
        <begin position="1"/>
        <end position="450"/>
    </location>
</feature>
<feature type="domain" description="bHLH" evidence="1">
    <location>
        <begin position="263"/>
        <end position="312"/>
    </location>
</feature>
<feature type="domain" description="ACT" evidence="2">
    <location>
        <begin position="378"/>
        <end position="450"/>
    </location>
</feature>
<feature type="region of interest" description="Disordered" evidence="3">
    <location>
        <begin position="1"/>
        <end position="47"/>
    </location>
</feature>
<feature type="region of interest" description="Disordered" evidence="3">
    <location>
        <begin position="207"/>
        <end position="231"/>
    </location>
</feature>
<feature type="region of interest" description="Disordered" evidence="3">
    <location>
        <begin position="244"/>
        <end position="265"/>
    </location>
</feature>
<feature type="compositionally biased region" description="Low complexity" evidence="3">
    <location>
        <begin position="209"/>
        <end position="220"/>
    </location>
</feature>
<feature type="compositionally biased region" description="Basic and acidic residues" evidence="3">
    <location>
        <begin position="221"/>
        <end position="230"/>
    </location>
</feature>
<feature type="mutagenesis site" description="Excessive stomatal differentiation." evidence="5">
    <original>R</original>
    <variation>H</variation>
    <location>
        <position position="203"/>
    </location>
</feature>
<feature type="sequence conflict" description="In Ref. 5; AF488572." evidence="7" ref="5">
    <original>Y</original>
    <variation>N</variation>
    <location>
        <position position="284"/>
    </location>
</feature>
<dbReference type="EMBL" id="EU369670">
    <property type="protein sequence ID" value="ACA63683.1"/>
    <property type="molecule type" value="mRNA"/>
</dbReference>
<dbReference type="EMBL" id="AC012187">
    <property type="protein sequence ID" value="AAF78492.1"/>
    <property type="molecule type" value="Genomic_DNA"/>
</dbReference>
<dbReference type="EMBL" id="CP002684">
    <property type="protein sequence ID" value="AEE28940.1"/>
    <property type="molecule type" value="Genomic_DNA"/>
</dbReference>
<dbReference type="EMBL" id="AK118011">
    <property type="protein sequence ID" value="BAC42644.1"/>
    <property type="molecule type" value="mRNA"/>
</dbReference>
<dbReference type="EMBL" id="BT005377">
    <property type="protein sequence ID" value="AAO63441.1"/>
    <property type="molecule type" value="mRNA"/>
</dbReference>
<dbReference type="EMBL" id="AF488572">
    <property type="status" value="NOT_ANNOTATED_CDS"/>
    <property type="molecule type" value="mRNA"/>
</dbReference>
<dbReference type="PIR" id="C86262">
    <property type="entry name" value="C86262"/>
</dbReference>
<dbReference type="RefSeq" id="NP_172746.2">
    <property type="nucleotide sequence ID" value="NM_101157.3"/>
</dbReference>
<dbReference type="SMR" id="Q9LPW3"/>
<dbReference type="BioGRID" id="23083">
    <property type="interactions" value="11"/>
</dbReference>
<dbReference type="FunCoup" id="Q9LPW3">
    <property type="interactions" value="437"/>
</dbReference>
<dbReference type="IntAct" id="Q9LPW3">
    <property type="interactions" value="3"/>
</dbReference>
<dbReference type="STRING" id="3702.Q9LPW3"/>
<dbReference type="GlyGen" id="Q9LPW3">
    <property type="glycosylation" value="1 site"/>
</dbReference>
<dbReference type="PaxDb" id="3702-AT1G12860.1"/>
<dbReference type="ProteomicsDB" id="232887"/>
<dbReference type="EnsemblPlants" id="AT1G12860.1">
    <property type="protein sequence ID" value="AT1G12860.1"/>
    <property type="gene ID" value="AT1G12860"/>
</dbReference>
<dbReference type="GeneID" id="837843"/>
<dbReference type="Gramene" id="AT1G12860.1">
    <property type="protein sequence ID" value="AT1G12860.1"/>
    <property type="gene ID" value="AT1G12860"/>
</dbReference>
<dbReference type="KEGG" id="ath:AT1G12860"/>
<dbReference type="Araport" id="AT1G12860"/>
<dbReference type="TAIR" id="AT1G12860">
    <property type="gene designation" value="SCRM2"/>
</dbReference>
<dbReference type="eggNOG" id="ENOG502QQ2A">
    <property type="taxonomic scope" value="Eukaryota"/>
</dbReference>
<dbReference type="HOGENOM" id="CLU_035660_5_0_1"/>
<dbReference type="InParanoid" id="Q9LPW3"/>
<dbReference type="OMA" id="CQEDHDV"/>
<dbReference type="PhylomeDB" id="Q9LPW3"/>
<dbReference type="PRO" id="PR:Q9LPW3"/>
<dbReference type="Proteomes" id="UP000006548">
    <property type="component" value="Chromosome 1"/>
</dbReference>
<dbReference type="ExpressionAtlas" id="Q9LPW3">
    <property type="expression patterns" value="baseline and differential"/>
</dbReference>
<dbReference type="GO" id="GO:0005634">
    <property type="term" value="C:nucleus"/>
    <property type="evidence" value="ECO:0007669"/>
    <property type="project" value="UniProtKB-SubCell"/>
</dbReference>
<dbReference type="GO" id="GO:0003700">
    <property type="term" value="F:DNA-binding transcription factor activity"/>
    <property type="evidence" value="ECO:0000250"/>
    <property type="project" value="TAIR"/>
</dbReference>
<dbReference type="GO" id="GO:0046983">
    <property type="term" value="F:protein dimerization activity"/>
    <property type="evidence" value="ECO:0007669"/>
    <property type="project" value="InterPro"/>
</dbReference>
<dbReference type="GO" id="GO:0000976">
    <property type="term" value="F:transcription cis-regulatory region binding"/>
    <property type="evidence" value="ECO:0000353"/>
    <property type="project" value="TAIR"/>
</dbReference>
<dbReference type="GO" id="GO:0010444">
    <property type="term" value="P:guard mother cell differentiation"/>
    <property type="evidence" value="ECO:0000315"/>
    <property type="project" value="TAIR"/>
</dbReference>
<dbReference type="GO" id="GO:0006355">
    <property type="term" value="P:regulation of DNA-templated transcription"/>
    <property type="evidence" value="ECO:0000304"/>
    <property type="project" value="TAIR"/>
</dbReference>
<dbReference type="GO" id="GO:0050826">
    <property type="term" value="P:response to freezing"/>
    <property type="evidence" value="ECO:0000315"/>
    <property type="project" value="TAIR"/>
</dbReference>
<dbReference type="CDD" id="cd04873">
    <property type="entry name" value="ACT_UUR-ACR-like"/>
    <property type="match status" value="1"/>
</dbReference>
<dbReference type="CDD" id="cd11443">
    <property type="entry name" value="bHLH_AtAMS_like"/>
    <property type="match status" value="1"/>
</dbReference>
<dbReference type="FunFam" id="4.10.280.10:FF:000066">
    <property type="entry name" value="BHLH transcription factor"/>
    <property type="match status" value="1"/>
</dbReference>
<dbReference type="Gene3D" id="4.10.280.10">
    <property type="entry name" value="Helix-loop-helix DNA-binding domain"/>
    <property type="match status" value="1"/>
</dbReference>
<dbReference type="InterPro" id="IPR002912">
    <property type="entry name" value="ACT_dom"/>
</dbReference>
<dbReference type="InterPro" id="IPR054502">
    <property type="entry name" value="bHLH-TF_ACT-like_plant"/>
</dbReference>
<dbReference type="InterPro" id="IPR011598">
    <property type="entry name" value="bHLH_dom"/>
</dbReference>
<dbReference type="InterPro" id="IPR036638">
    <property type="entry name" value="HLH_DNA-bd_sf"/>
</dbReference>
<dbReference type="InterPro" id="IPR051358">
    <property type="entry name" value="TF_AMS/ICE1/BHLH6-like"/>
</dbReference>
<dbReference type="PANTHER" id="PTHR31945:SF129">
    <property type="entry name" value="TRANSCRIPTION FACTOR SCREAM2"/>
    <property type="match status" value="1"/>
</dbReference>
<dbReference type="PANTHER" id="PTHR31945">
    <property type="entry name" value="TRANSCRIPTION FACTOR SCREAM2-RELATED"/>
    <property type="match status" value="1"/>
</dbReference>
<dbReference type="Pfam" id="PF22754">
    <property type="entry name" value="bHLH-TF_ACT-like_plant"/>
    <property type="match status" value="1"/>
</dbReference>
<dbReference type="Pfam" id="PF00010">
    <property type="entry name" value="HLH"/>
    <property type="match status" value="1"/>
</dbReference>
<dbReference type="SMART" id="SM00353">
    <property type="entry name" value="HLH"/>
    <property type="match status" value="1"/>
</dbReference>
<dbReference type="SUPFAM" id="SSF47459">
    <property type="entry name" value="HLH, helix-loop-helix DNA-binding domain"/>
    <property type="match status" value="1"/>
</dbReference>
<dbReference type="PROSITE" id="PS51671">
    <property type="entry name" value="ACT"/>
    <property type="match status" value="1"/>
</dbReference>
<dbReference type="PROSITE" id="PS50888">
    <property type="entry name" value="BHLH"/>
    <property type="match status" value="1"/>
</dbReference>
<name>SCRM2_ARATH</name>
<evidence type="ECO:0000255" key="1">
    <source>
        <dbReference type="PROSITE-ProRule" id="PRU00981"/>
    </source>
</evidence>
<evidence type="ECO:0000255" key="2">
    <source>
        <dbReference type="PROSITE-ProRule" id="PRU01007"/>
    </source>
</evidence>
<evidence type="ECO:0000256" key="3">
    <source>
        <dbReference type="SAM" id="MobiDB-lite"/>
    </source>
</evidence>
<evidence type="ECO:0000269" key="4">
    <source>
    </source>
</evidence>
<evidence type="ECO:0000269" key="5">
    <source>
    </source>
</evidence>
<evidence type="ECO:0000269" key="6">
    <source>
    </source>
</evidence>
<evidence type="ECO:0000305" key="7"/>
<sequence>MNSDGVWLDGSGESPEVNNGEAASWVRNPDEDWFNNPPPPQHTNQNDFRFNGGFPLNPSENLLLLLQQSIDSSSSSSPLLHPFTLDAASQQQQQQQQQQEQSFLATKACIVSLLNVPTINNNTFDDFGFDSGFLGQQFHGNHQSPNSMNFTGLNHSVPDFLPAPENSSGSCGLSPLFSNRAKVLKPLQVMASSGSQPTLFQKRAAMRQSSSSKMCNSESSSEMRKSSYEREIDDTSTGIIDISGLNYESDDHNTNNNKGKKKGMPAKNLMAERRRRKKLNDRLYMLRSVVPKISKMDRASILGDAIDYLKELLQRINDLHTELESTPPSSSSLHPLTPTPQTLSYRVKEELCPSSSLPSPKGQQPRVEVRLREGKAVNIHMFCGRRPGLLLSTMRALDNLGLDVQQAVISCFNGFALDVFRAEQCQEDHDVLPEQIKAVLLDTAGYAGLV</sequence>
<proteinExistence type="evidence at protein level"/>
<organism>
    <name type="scientific">Arabidopsis thaliana</name>
    <name type="common">Mouse-ear cress</name>
    <dbReference type="NCBI Taxonomy" id="3702"/>
    <lineage>
        <taxon>Eukaryota</taxon>
        <taxon>Viridiplantae</taxon>
        <taxon>Streptophyta</taxon>
        <taxon>Embryophyta</taxon>
        <taxon>Tracheophyta</taxon>
        <taxon>Spermatophyta</taxon>
        <taxon>Magnoliopsida</taxon>
        <taxon>eudicotyledons</taxon>
        <taxon>Gunneridae</taxon>
        <taxon>Pentapetalae</taxon>
        <taxon>rosids</taxon>
        <taxon>malvids</taxon>
        <taxon>Brassicales</taxon>
        <taxon>Brassicaceae</taxon>
        <taxon>Camelineae</taxon>
        <taxon>Arabidopsis</taxon>
    </lineage>
</organism>
<gene>
    <name type="primary">SCRM2</name>
    <name type="synonym">BHLH33</name>
    <name type="synonym">EN44</name>
    <name type="ordered locus">At1g12860</name>
    <name type="ORF">F13K23.12</name>
</gene>
<accession>Q9LPW3</accession>
<protein>
    <recommendedName>
        <fullName>Transcription factor SCREAM2</fullName>
    </recommendedName>
    <alternativeName>
        <fullName>Basic helix-loop-helix protein 33</fullName>
        <shortName>AtbHLH33</shortName>
        <shortName>bHLH 33</shortName>
    </alternativeName>
    <alternativeName>
        <fullName>Transcription factor EN 44</fullName>
    </alternativeName>
    <alternativeName>
        <fullName>bHLH transcription factor bHLH033</fullName>
    </alternativeName>
</protein>
<comment type="function">
    <text evidence="5 6">Mediates stomatal differentiation in the epidermis probably by controlling successive roles of SPCH, MUTE, and FAMA (PubMed:18641265). Functions as a dimer with SPCH during stomatal initiation (PubMed:18641265, PubMed:28507175).</text>
</comment>
<comment type="subunit">
    <text evidence="5 6 7">Homodimer (Probable). Heterodimers with SPCH, MUTE, and FAMA.</text>
</comment>
<comment type="interaction">
    <interactant intactId="EBI-4451593">
        <id>Q9LPW3</id>
    </interactant>
    <interactant intactId="EBI-349548">
        <id>Q39026</id>
        <label>MPK6</label>
    </interactant>
    <organismsDiffer>false</organismsDiffer>
    <experiments>4</experiments>
</comment>
<comment type="subcellular location">
    <subcellularLocation>
        <location evidence="1 5">Nucleus</location>
    </subcellularLocation>
</comment>
<comment type="tissue specificity">
    <text evidence="4 5">Expressed constitutively in roots, leaves, stems, and flowers. Broad expression within stomatal cell lineages of leaf epidermis, except in mature guard-cells.</text>
</comment>
<comment type="disruption phenotype">
    <text evidence="5">The ice1-2 scrm2-1 double mutant lacks stomata so that the epidermis only contains pavement cells.</text>
</comment>
<reference key="1">
    <citation type="journal article" date="2008" name="Plant Cell">
        <title>SCREAM/ICE1 and SCREAM2 specify three cell-state transitional steps leading to arabidopsis stomatal differentiation.</title>
        <authorList>
            <person name="Kanaoka M.M."/>
            <person name="Pillitteri L.J."/>
            <person name="Fujii H."/>
            <person name="Yoshida Y."/>
            <person name="Bogenschutz N.L."/>
            <person name="Takabayashi J."/>
            <person name="Zhu J.-K."/>
            <person name="Torii K.U."/>
        </authorList>
    </citation>
    <scope>NUCLEOTIDE SEQUENCE [MRNA]</scope>
    <scope>FUNCTION</scope>
    <scope>MUTAGENESIS OF ARG-203</scope>
    <scope>TISSUE SPECIFICITY</scope>
    <scope>SUBCELLULAR LOCATION</scope>
    <scope>INTERACTION WITH SPCH; MUTE AND FAMA</scope>
    <scope>DISRUPTION PHENOTYPE</scope>
    <source>
        <strain>cv. Columbia</strain>
    </source>
</reference>
<reference key="2">
    <citation type="journal article" date="2000" name="Nature">
        <title>Sequence and analysis of chromosome 1 of the plant Arabidopsis thaliana.</title>
        <authorList>
            <person name="Theologis A."/>
            <person name="Ecker J.R."/>
            <person name="Palm C.J."/>
            <person name="Federspiel N.A."/>
            <person name="Kaul S."/>
            <person name="White O."/>
            <person name="Alonso J."/>
            <person name="Altafi H."/>
            <person name="Araujo R."/>
            <person name="Bowman C.L."/>
            <person name="Brooks S.Y."/>
            <person name="Buehler E."/>
            <person name="Chan A."/>
            <person name="Chao Q."/>
            <person name="Chen H."/>
            <person name="Cheuk R.F."/>
            <person name="Chin C.W."/>
            <person name="Chung M.K."/>
            <person name="Conn L."/>
            <person name="Conway A.B."/>
            <person name="Conway A.R."/>
            <person name="Creasy T.H."/>
            <person name="Dewar K."/>
            <person name="Dunn P."/>
            <person name="Etgu P."/>
            <person name="Feldblyum T.V."/>
            <person name="Feng J.-D."/>
            <person name="Fong B."/>
            <person name="Fujii C.Y."/>
            <person name="Gill J.E."/>
            <person name="Goldsmith A.D."/>
            <person name="Haas B."/>
            <person name="Hansen N.F."/>
            <person name="Hughes B."/>
            <person name="Huizar L."/>
            <person name="Hunter J.L."/>
            <person name="Jenkins J."/>
            <person name="Johnson-Hopson C."/>
            <person name="Khan S."/>
            <person name="Khaykin E."/>
            <person name="Kim C.J."/>
            <person name="Koo H.L."/>
            <person name="Kremenetskaia I."/>
            <person name="Kurtz D.B."/>
            <person name="Kwan A."/>
            <person name="Lam B."/>
            <person name="Langin-Hooper S."/>
            <person name="Lee A."/>
            <person name="Lee J.M."/>
            <person name="Lenz C.A."/>
            <person name="Li J.H."/>
            <person name="Li Y.-P."/>
            <person name="Lin X."/>
            <person name="Liu S.X."/>
            <person name="Liu Z.A."/>
            <person name="Luros J.S."/>
            <person name="Maiti R."/>
            <person name="Marziali A."/>
            <person name="Militscher J."/>
            <person name="Miranda M."/>
            <person name="Nguyen M."/>
            <person name="Nierman W.C."/>
            <person name="Osborne B.I."/>
            <person name="Pai G."/>
            <person name="Peterson J."/>
            <person name="Pham P.K."/>
            <person name="Rizzo M."/>
            <person name="Rooney T."/>
            <person name="Rowley D."/>
            <person name="Sakano H."/>
            <person name="Salzberg S.L."/>
            <person name="Schwartz J.R."/>
            <person name="Shinn P."/>
            <person name="Southwick A.M."/>
            <person name="Sun H."/>
            <person name="Tallon L.J."/>
            <person name="Tambunga G."/>
            <person name="Toriumi M.J."/>
            <person name="Town C.D."/>
            <person name="Utterback T."/>
            <person name="Van Aken S."/>
            <person name="Vaysberg M."/>
            <person name="Vysotskaia V.S."/>
            <person name="Walker M."/>
            <person name="Wu D."/>
            <person name="Yu G."/>
            <person name="Fraser C.M."/>
            <person name="Venter J.C."/>
            <person name="Davis R.W."/>
        </authorList>
    </citation>
    <scope>NUCLEOTIDE SEQUENCE [LARGE SCALE GENOMIC DNA]</scope>
    <source>
        <strain>cv. Columbia</strain>
    </source>
</reference>
<reference key="3">
    <citation type="journal article" date="2017" name="Plant J.">
        <title>Araport11: a complete reannotation of the Arabidopsis thaliana reference genome.</title>
        <authorList>
            <person name="Cheng C.Y."/>
            <person name="Krishnakumar V."/>
            <person name="Chan A.P."/>
            <person name="Thibaud-Nissen F."/>
            <person name="Schobel S."/>
            <person name="Town C.D."/>
        </authorList>
    </citation>
    <scope>GENOME REANNOTATION</scope>
    <source>
        <strain>cv. Columbia</strain>
    </source>
</reference>
<reference key="4">
    <citation type="journal article" date="2002" name="Science">
        <title>Functional annotation of a full-length Arabidopsis cDNA collection.</title>
        <authorList>
            <person name="Seki M."/>
            <person name="Narusaka M."/>
            <person name="Kamiya A."/>
            <person name="Ishida J."/>
            <person name="Satou M."/>
            <person name="Sakurai T."/>
            <person name="Nakajima M."/>
            <person name="Enju A."/>
            <person name="Akiyama K."/>
            <person name="Oono Y."/>
            <person name="Muramatsu M."/>
            <person name="Hayashizaki Y."/>
            <person name="Kawai J."/>
            <person name="Carninci P."/>
            <person name="Itoh M."/>
            <person name="Ishii Y."/>
            <person name="Arakawa T."/>
            <person name="Shibata K."/>
            <person name="Shinagawa A."/>
            <person name="Shinozaki K."/>
        </authorList>
    </citation>
    <scope>NUCLEOTIDE SEQUENCE [LARGE SCALE MRNA]</scope>
    <source>
        <strain>cv. Columbia</strain>
    </source>
</reference>
<reference key="5">
    <citation type="journal article" date="2003" name="Science">
        <title>Empirical analysis of transcriptional activity in the Arabidopsis genome.</title>
        <authorList>
            <person name="Yamada K."/>
            <person name="Lim J."/>
            <person name="Dale J.M."/>
            <person name="Chen H."/>
            <person name="Shinn P."/>
            <person name="Palm C.J."/>
            <person name="Southwick A.M."/>
            <person name="Wu H.C."/>
            <person name="Kim C.J."/>
            <person name="Nguyen M."/>
            <person name="Pham P.K."/>
            <person name="Cheuk R.F."/>
            <person name="Karlin-Newmann G."/>
            <person name="Liu S.X."/>
            <person name="Lam B."/>
            <person name="Sakano H."/>
            <person name="Wu T."/>
            <person name="Yu G."/>
            <person name="Miranda M."/>
            <person name="Quach H.L."/>
            <person name="Tripp M."/>
            <person name="Chang C.H."/>
            <person name="Lee J.M."/>
            <person name="Toriumi M.J."/>
            <person name="Chan M.M."/>
            <person name="Tang C.C."/>
            <person name="Onodera C.S."/>
            <person name="Deng J.M."/>
            <person name="Akiyama K."/>
            <person name="Ansari Y."/>
            <person name="Arakawa T."/>
            <person name="Banh J."/>
            <person name="Banno F."/>
            <person name="Bowser L."/>
            <person name="Brooks S.Y."/>
            <person name="Carninci P."/>
            <person name="Chao Q."/>
            <person name="Choy N."/>
            <person name="Enju A."/>
            <person name="Goldsmith A.D."/>
            <person name="Gurjal M."/>
            <person name="Hansen N.F."/>
            <person name="Hayashizaki Y."/>
            <person name="Johnson-Hopson C."/>
            <person name="Hsuan V.W."/>
            <person name="Iida K."/>
            <person name="Karnes M."/>
            <person name="Khan S."/>
            <person name="Koesema E."/>
            <person name="Ishida J."/>
            <person name="Jiang P.X."/>
            <person name="Jones T."/>
            <person name="Kawai J."/>
            <person name="Kamiya A."/>
            <person name="Meyers C."/>
            <person name="Nakajima M."/>
            <person name="Narusaka M."/>
            <person name="Seki M."/>
            <person name="Sakurai T."/>
            <person name="Satou M."/>
            <person name="Tamse R."/>
            <person name="Vaysberg M."/>
            <person name="Wallender E.K."/>
            <person name="Wong C."/>
            <person name="Yamamura Y."/>
            <person name="Yuan S."/>
            <person name="Shinozaki K."/>
            <person name="Davis R.W."/>
            <person name="Theologis A."/>
            <person name="Ecker J.R."/>
        </authorList>
    </citation>
    <scope>NUCLEOTIDE SEQUENCE [LARGE SCALE MRNA]</scope>
    <source>
        <strain>cv. Columbia</strain>
    </source>
</reference>
<reference key="6">
    <citation type="journal article" date="2003" name="Mol. Biol. Evol.">
        <title>The basic helix-loop-helix transcription factor family in plants: a genome-wide study of protein structure and functional diversity.</title>
        <authorList>
            <person name="Heim M.A."/>
            <person name="Jakoby M."/>
            <person name="Werber M."/>
            <person name="Martin C."/>
            <person name="Weisshaar B."/>
            <person name="Bailey P.C."/>
        </authorList>
    </citation>
    <scope>NUCLEOTIDE SEQUENCE [MRNA] OF 278-450</scope>
    <scope>TISSUE SPECIFICITY</scope>
    <scope>GENE FAMILY</scope>
    <scope>NOMENCLATURE</scope>
    <source>
        <strain>cv. Columbia</strain>
    </source>
</reference>
<reference key="7">
    <citation type="journal article" date="2003" name="Plant Cell">
        <title>The Arabidopsis basic/helix-loop-helix transcription factor family.</title>
        <authorList>
            <person name="Toledo-Ortiz G."/>
            <person name="Huq E."/>
            <person name="Quail P.H."/>
        </authorList>
    </citation>
    <scope>GENE FAMILY</scope>
</reference>
<reference key="8">
    <citation type="journal article" date="2003" name="Plant Cell">
        <title>Update on the basic helix-loop-helix transcription factor gene family in Arabidopsis thaliana.</title>
        <authorList>
            <person name="Bailey P.C."/>
            <person name="Martin C."/>
            <person name="Toledo-Ortiz G."/>
            <person name="Quail P.H."/>
            <person name="Huq E."/>
            <person name="Heim M.A."/>
            <person name="Jakoby M."/>
            <person name="Werber M."/>
            <person name="Weisshaar B."/>
        </authorList>
    </citation>
    <scope>GENE FAMILY</scope>
    <scope>NOMENCLATURE</scope>
</reference>
<reference key="9">
    <citation type="journal article" date="2017" name="Plant Physiol.">
        <title>A mutation in the bHLH domain of the SPCH transcription factor uncovers a BR-dependent mechanism for stomatal development.</title>
        <authorList>
            <person name="de Marcos A."/>
            <person name="Houbaert A."/>
            <person name="Trivino M."/>
            <person name="Delgado D."/>
            <person name="Martin-Trillo M."/>
            <person name="Russinova E."/>
            <person name="Fenoll C."/>
            <person name="Mena M."/>
        </authorList>
    </citation>
    <scope>FUNCTION</scope>
    <scope>INTERACTION WITH SPCH</scope>
    <source>
        <strain>cv. Columbia</strain>
    </source>
</reference>
<keyword id="KW-0217">Developmental protein</keyword>
<keyword id="KW-0238">DNA-binding</keyword>
<keyword id="KW-0539">Nucleus</keyword>
<keyword id="KW-1185">Reference proteome</keyword>
<keyword id="KW-0804">Transcription</keyword>
<keyword id="KW-0805">Transcription regulation</keyword>